<name>PTH_PSESM</name>
<accession>Q888C8</accession>
<protein>
    <recommendedName>
        <fullName evidence="1">Peptidyl-tRNA hydrolase</fullName>
        <shortName evidence="1">Pth</shortName>
        <ecNumber evidence="1">3.1.1.29</ecNumber>
    </recommendedName>
</protein>
<evidence type="ECO:0000255" key="1">
    <source>
        <dbReference type="HAMAP-Rule" id="MF_00083"/>
    </source>
</evidence>
<sequence>MTAIQLIVGLGNPGAEYEQTRHNAGAFFVERIAAAQRVNLVPERKFFGLTGRFTHQGQDVRLLIPTTYMNRSGQAVAALAGFYRIPIESILVAHDELDLPPGVAKLKVGGGHGGHNGLRDIIAQLGNQNTFHRLRLGIGHPGDASKVSGFVLGRAPRAEQEKLDASIDFALGVLPDIFAGEWNRAMKNLHSQKA</sequence>
<organism>
    <name type="scientific">Pseudomonas syringae pv. tomato (strain ATCC BAA-871 / DC3000)</name>
    <dbReference type="NCBI Taxonomy" id="223283"/>
    <lineage>
        <taxon>Bacteria</taxon>
        <taxon>Pseudomonadati</taxon>
        <taxon>Pseudomonadota</taxon>
        <taxon>Gammaproteobacteria</taxon>
        <taxon>Pseudomonadales</taxon>
        <taxon>Pseudomonadaceae</taxon>
        <taxon>Pseudomonas</taxon>
    </lineage>
</organism>
<gene>
    <name evidence="1" type="primary">pth</name>
    <name type="ordered locus">PSPTO_1102</name>
</gene>
<feature type="chain" id="PRO_0000187798" description="Peptidyl-tRNA hydrolase">
    <location>
        <begin position="1"/>
        <end position="194"/>
    </location>
</feature>
<feature type="active site" description="Proton acceptor" evidence="1">
    <location>
        <position position="22"/>
    </location>
</feature>
<feature type="binding site" evidence="1">
    <location>
        <position position="17"/>
    </location>
    <ligand>
        <name>tRNA</name>
        <dbReference type="ChEBI" id="CHEBI:17843"/>
    </ligand>
</feature>
<feature type="binding site" evidence="1">
    <location>
        <position position="68"/>
    </location>
    <ligand>
        <name>tRNA</name>
        <dbReference type="ChEBI" id="CHEBI:17843"/>
    </ligand>
</feature>
<feature type="binding site" evidence="1">
    <location>
        <position position="70"/>
    </location>
    <ligand>
        <name>tRNA</name>
        <dbReference type="ChEBI" id="CHEBI:17843"/>
    </ligand>
</feature>
<feature type="binding site" evidence="1">
    <location>
        <position position="116"/>
    </location>
    <ligand>
        <name>tRNA</name>
        <dbReference type="ChEBI" id="CHEBI:17843"/>
    </ligand>
</feature>
<feature type="site" description="Discriminates between blocked and unblocked aminoacyl-tRNA" evidence="1">
    <location>
        <position position="12"/>
    </location>
</feature>
<feature type="site" description="Stabilizes the basic form of H active site to accept a proton" evidence="1">
    <location>
        <position position="95"/>
    </location>
</feature>
<dbReference type="EC" id="3.1.1.29" evidence="1"/>
<dbReference type="EMBL" id="AE016853">
    <property type="protein sequence ID" value="AAO54631.1"/>
    <property type="molecule type" value="Genomic_DNA"/>
</dbReference>
<dbReference type="RefSeq" id="NP_790936.1">
    <property type="nucleotide sequence ID" value="NC_004578.1"/>
</dbReference>
<dbReference type="RefSeq" id="WP_011103428.1">
    <property type="nucleotide sequence ID" value="NC_004578.1"/>
</dbReference>
<dbReference type="SMR" id="Q888C8"/>
<dbReference type="STRING" id="223283.PSPTO_1102"/>
<dbReference type="GeneID" id="1182737"/>
<dbReference type="KEGG" id="pst:PSPTO_1102"/>
<dbReference type="PATRIC" id="fig|223283.9.peg.1112"/>
<dbReference type="eggNOG" id="COG0193">
    <property type="taxonomic scope" value="Bacteria"/>
</dbReference>
<dbReference type="HOGENOM" id="CLU_062456_3_1_6"/>
<dbReference type="OrthoDB" id="9800507at2"/>
<dbReference type="PhylomeDB" id="Q888C8"/>
<dbReference type="Proteomes" id="UP000002515">
    <property type="component" value="Chromosome"/>
</dbReference>
<dbReference type="GO" id="GO:0005737">
    <property type="term" value="C:cytoplasm"/>
    <property type="evidence" value="ECO:0007669"/>
    <property type="project" value="UniProtKB-SubCell"/>
</dbReference>
<dbReference type="GO" id="GO:0004045">
    <property type="term" value="F:peptidyl-tRNA hydrolase activity"/>
    <property type="evidence" value="ECO:0007669"/>
    <property type="project" value="UniProtKB-UniRule"/>
</dbReference>
<dbReference type="GO" id="GO:0000049">
    <property type="term" value="F:tRNA binding"/>
    <property type="evidence" value="ECO:0007669"/>
    <property type="project" value="UniProtKB-UniRule"/>
</dbReference>
<dbReference type="GO" id="GO:0006515">
    <property type="term" value="P:protein quality control for misfolded or incompletely synthesized proteins"/>
    <property type="evidence" value="ECO:0007669"/>
    <property type="project" value="UniProtKB-UniRule"/>
</dbReference>
<dbReference type="GO" id="GO:0072344">
    <property type="term" value="P:rescue of stalled ribosome"/>
    <property type="evidence" value="ECO:0007669"/>
    <property type="project" value="UniProtKB-UniRule"/>
</dbReference>
<dbReference type="CDD" id="cd00462">
    <property type="entry name" value="PTH"/>
    <property type="match status" value="1"/>
</dbReference>
<dbReference type="FunFam" id="3.40.50.1470:FF:000001">
    <property type="entry name" value="Peptidyl-tRNA hydrolase"/>
    <property type="match status" value="1"/>
</dbReference>
<dbReference type="Gene3D" id="3.40.50.1470">
    <property type="entry name" value="Peptidyl-tRNA hydrolase"/>
    <property type="match status" value="1"/>
</dbReference>
<dbReference type="HAMAP" id="MF_00083">
    <property type="entry name" value="Pept_tRNA_hydro_bact"/>
    <property type="match status" value="1"/>
</dbReference>
<dbReference type="InterPro" id="IPR001328">
    <property type="entry name" value="Pept_tRNA_hydro"/>
</dbReference>
<dbReference type="InterPro" id="IPR018171">
    <property type="entry name" value="Pept_tRNA_hydro_CS"/>
</dbReference>
<dbReference type="InterPro" id="IPR036416">
    <property type="entry name" value="Pept_tRNA_hydro_sf"/>
</dbReference>
<dbReference type="NCBIfam" id="TIGR00447">
    <property type="entry name" value="pth"/>
    <property type="match status" value="1"/>
</dbReference>
<dbReference type="PANTHER" id="PTHR17224">
    <property type="entry name" value="PEPTIDYL-TRNA HYDROLASE"/>
    <property type="match status" value="1"/>
</dbReference>
<dbReference type="PANTHER" id="PTHR17224:SF1">
    <property type="entry name" value="PEPTIDYL-TRNA HYDROLASE"/>
    <property type="match status" value="1"/>
</dbReference>
<dbReference type="Pfam" id="PF01195">
    <property type="entry name" value="Pept_tRNA_hydro"/>
    <property type="match status" value="1"/>
</dbReference>
<dbReference type="SUPFAM" id="SSF53178">
    <property type="entry name" value="Peptidyl-tRNA hydrolase-like"/>
    <property type="match status" value="1"/>
</dbReference>
<dbReference type="PROSITE" id="PS01195">
    <property type="entry name" value="PEPT_TRNA_HYDROL_1"/>
    <property type="match status" value="1"/>
</dbReference>
<dbReference type="PROSITE" id="PS01196">
    <property type="entry name" value="PEPT_TRNA_HYDROL_2"/>
    <property type="match status" value="1"/>
</dbReference>
<keyword id="KW-0963">Cytoplasm</keyword>
<keyword id="KW-0378">Hydrolase</keyword>
<keyword id="KW-1185">Reference proteome</keyword>
<keyword id="KW-0694">RNA-binding</keyword>
<keyword id="KW-0820">tRNA-binding</keyword>
<comment type="function">
    <text evidence="1">Hydrolyzes ribosome-free peptidyl-tRNAs (with 1 or more amino acids incorporated), which drop off the ribosome during protein synthesis, or as a result of ribosome stalling.</text>
</comment>
<comment type="function">
    <text evidence="1">Catalyzes the release of premature peptidyl moieties from peptidyl-tRNA molecules trapped in stalled 50S ribosomal subunits, and thus maintains levels of free tRNAs and 50S ribosomes.</text>
</comment>
<comment type="catalytic activity">
    <reaction evidence="1">
        <text>an N-acyl-L-alpha-aminoacyl-tRNA + H2O = an N-acyl-L-amino acid + a tRNA + H(+)</text>
        <dbReference type="Rhea" id="RHEA:54448"/>
        <dbReference type="Rhea" id="RHEA-COMP:10123"/>
        <dbReference type="Rhea" id="RHEA-COMP:13883"/>
        <dbReference type="ChEBI" id="CHEBI:15377"/>
        <dbReference type="ChEBI" id="CHEBI:15378"/>
        <dbReference type="ChEBI" id="CHEBI:59874"/>
        <dbReference type="ChEBI" id="CHEBI:78442"/>
        <dbReference type="ChEBI" id="CHEBI:138191"/>
        <dbReference type="EC" id="3.1.1.29"/>
    </reaction>
</comment>
<comment type="subunit">
    <text evidence="1">Monomer.</text>
</comment>
<comment type="subcellular location">
    <subcellularLocation>
        <location evidence="1">Cytoplasm</location>
    </subcellularLocation>
</comment>
<comment type="similarity">
    <text evidence="1">Belongs to the PTH family.</text>
</comment>
<proteinExistence type="inferred from homology"/>
<reference key="1">
    <citation type="journal article" date="2003" name="Proc. Natl. Acad. Sci. U.S.A.">
        <title>The complete genome sequence of the Arabidopsis and tomato pathogen Pseudomonas syringae pv. tomato DC3000.</title>
        <authorList>
            <person name="Buell C.R."/>
            <person name="Joardar V."/>
            <person name="Lindeberg M."/>
            <person name="Selengut J."/>
            <person name="Paulsen I.T."/>
            <person name="Gwinn M.L."/>
            <person name="Dodson R.J."/>
            <person name="DeBoy R.T."/>
            <person name="Durkin A.S."/>
            <person name="Kolonay J.F."/>
            <person name="Madupu R."/>
            <person name="Daugherty S.C."/>
            <person name="Brinkac L.M."/>
            <person name="Beanan M.J."/>
            <person name="Haft D.H."/>
            <person name="Nelson W.C."/>
            <person name="Davidsen T.M."/>
            <person name="Zafar N."/>
            <person name="Zhou L."/>
            <person name="Liu J."/>
            <person name="Yuan Q."/>
            <person name="Khouri H.M."/>
            <person name="Fedorova N.B."/>
            <person name="Tran B."/>
            <person name="Russell D."/>
            <person name="Berry K.J."/>
            <person name="Utterback T.R."/>
            <person name="Van Aken S.E."/>
            <person name="Feldblyum T.V."/>
            <person name="D'Ascenzo M."/>
            <person name="Deng W.-L."/>
            <person name="Ramos A.R."/>
            <person name="Alfano J.R."/>
            <person name="Cartinhour S."/>
            <person name="Chatterjee A.K."/>
            <person name="Delaney T.P."/>
            <person name="Lazarowitz S.G."/>
            <person name="Martin G.B."/>
            <person name="Schneider D.J."/>
            <person name="Tang X."/>
            <person name="Bender C.L."/>
            <person name="White O."/>
            <person name="Fraser C.M."/>
            <person name="Collmer A."/>
        </authorList>
    </citation>
    <scope>NUCLEOTIDE SEQUENCE [LARGE SCALE GENOMIC DNA]</scope>
    <source>
        <strain>ATCC BAA-871 / DC3000</strain>
    </source>
</reference>